<protein>
    <recommendedName>
        <fullName evidence="1">UPF0305 protein MMP0665</fullName>
    </recommendedName>
</protein>
<organism>
    <name type="scientific">Methanococcus maripaludis (strain DSM 14266 / JCM 13030 / NBRC 101832 / S2 / LL)</name>
    <dbReference type="NCBI Taxonomy" id="267377"/>
    <lineage>
        <taxon>Archaea</taxon>
        <taxon>Methanobacteriati</taxon>
        <taxon>Methanobacteriota</taxon>
        <taxon>Methanomada group</taxon>
        <taxon>Methanococci</taxon>
        <taxon>Methanococcales</taxon>
        <taxon>Methanococcaceae</taxon>
        <taxon>Methanococcus</taxon>
    </lineage>
</organism>
<reference key="1">
    <citation type="journal article" date="2004" name="J. Bacteriol.">
        <title>Complete genome sequence of the genetically tractable hydrogenotrophic methanogen Methanococcus maripaludis.</title>
        <authorList>
            <person name="Hendrickson E.L."/>
            <person name="Kaul R."/>
            <person name="Zhou Y."/>
            <person name="Bovee D."/>
            <person name="Chapman P."/>
            <person name="Chung J."/>
            <person name="Conway de Macario E."/>
            <person name="Dodsworth J.A."/>
            <person name="Gillett W."/>
            <person name="Graham D.E."/>
            <person name="Hackett M."/>
            <person name="Haydock A.K."/>
            <person name="Kang A."/>
            <person name="Land M.L."/>
            <person name="Levy R."/>
            <person name="Lie T.J."/>
            <person name="Major T.A."/>
            <person name="Moore B.C."/>
            <person name="Porat I."/>
            <person name="Palmeiri A."/>
            <person name="Rouse G."/>
            <person name="Saenphimmachak C."/>
            <person name="Soell D."/>
            <person name="Van Dien S."/>
            <person name="Wang T."/>
            <person name="Whitman W.B."/>
            <person name="Xia Q."/>
            <person name="Zhang Y."/>
            <person name="Larimer F.W."/>
            <person name="Olson M.V."/>
            <person name="Leigh J.A."/>
        </authorList>
    </citation>
    <scope>NUCLEOTIDE SEQUENCE [LARGE SCALE GENOMIC DNA]</scope>
    <source>
        <strain>DSM 14266 / JCM 13030 / NBRC 101832 / S2 / LL</strain>
    </source>
</reference>
<proteinExistence type="inferred from homology"/>
<dbReference type="EMBL" id="BX950229">
    <property type="protein sequence ID" value="CAF30221.1"/>
    <property type="molecule type" value="Genomic_DNA"/>
</dbReference>
<dbReference type="RefSeq" id="WP_011170609.1">
    <property type="nucleotide sequence ID" value="NC_005791.1"/>
</dbReference>
<dbReference type="STRING" id="267377.MMP0665"/>
<dbReference type="EnsemblBacteria" id="CAF30221">
    <property type="protein sequence ID" value="CAF30221"/>
    <property type="gene ID" value="MMP0665"/>
</dbReference>
<dbReference type="GeneID" id="2761401"/>
<dbReference type="KEGG" id="mmp:MMP0665"/>
<dbReference type="PATRIC" id="fig|267377.15.peg.682"/>
<dbReference type="eggNOG" id="arCOG03215">
    <property type="taxonomic scope" value="Archaea"/>
</dbReference>
<dbReference type="HOGENOM" id="CLU_089549_1_0_2"/>
<dbReference type="OrthoDB" id="81482at2157"/>
<dbReference type="Proteomes" id="UP000000590">
    <property type="component" value="Chromosome"/>
</dbReference>
<dbReference type="HAMAP" id="MF_00763">
    <property type="entry name" value="UPF0305"/>
    <property type="match status" value="1"/>
</dbReference>
<dbReference type="InterPro" id="IPR019215">
    <property type="entry name" value="DUF2115"/>
</dbReference>
<dbReference type="NCBIfam" id="NF002174">
    <property type="entry name" value="PRK01022.1-1"/>
    <property type="match status" value="1"/>
</dbReference>
<dbReference type="Pfam" id="PF09888">
    <property type="entry name" value="DUF2115"/>
    <property type="match status" value="1"/>
</dbReference>
<dbReference type="PIRSF" id="PIRSF004959">
    <property type="entry name" value="UCP004959"/>
    <property type="match status" value="1"/>
</dbReference>
<evidence type="ECO:0000255" key="1">
    <source>
        <dbReference type="HAMAP-Rule" id="MF_00763"/>
    </source>
</evidence>
<keyword id="KW-1185">Reference proteome</keyword>
<accession>P60818</accession>
<feature type="chain" id="PRO_0000141705" description="UPF0305 protein MMP0665">
    <location>
        <begin position="1"/>
        <end position="162"/>
    </location>
</feature>
<comment type="similarity">
    <text evidence="1">Belongs to the UPF0305 family.</text>
</comment>
<gene>
    <name type="ordered locus">MMP0665</name>
</gene>
<name>Y665_METMP</name>
<sequence>MKSRKFFSKLKEESYDVSIFDLMNAKVYLEKDMTYLPQDYKKGYIEDFFTFFPEVLKEIKNKTEEEIEDFEIEDEEIKRVELRLCSMGSKQTGRESYEKLVKTVINYLIFINERPLHALTTRFPGGKQIIEKNGNYYCPIKNAQSNELSICEFCICKDLNEL</sequence>